<proteinExistence type="evidence at protein level"/>
<comment type="function">
    <text evidence="3">Part of a complex with bicd-1 and dlc-1, which is recruited to the nuclear envelope by unc-83, where in turn, it recruits dynein to the nuclear surface and regulates nuclear migration in hypodermal precursor cells.</text>
</comment>
<comment type="subunit">
    <text evidence="3">Component of a dynein-regulating complex composed of at least bicd-1, dlc-1 and egal-1.</text>
</comment>
<comment type="interaction">
    <interactant intactId="EBI-328330">
        <id>Q17902</id>
    </interactant>
    <interactant intactId="EBI-2006416">
        <id>V6CJ04</id>
        <label>bicd-1</label>
    </interactant>
    <organismsDiffer>false</organismsDiffer>
    <experiments>2</experiments>
</comment>
<comment type="interaction">
    <interactant intactId="EBI-328330">
        <id>Q17902</id>
    </interactant>
    <interactant intactId="EBI-328324">
        <id>Q22799</id>
        <label>dlc-1</label>
    </interactant>
    <organismsDiffer>false</organismsDiffer>
    <experiments>5</experiments>
</comment>
<comment type="subcellular location">
    <subcellularLocation>
        <location evidence="6">Nucleus envelope</location>
    </subcellularLocation>
    <text evidence="6">Probably recruited to the nuclear envelope by unc-83.</text>
</comment>
<comment type="alternative products">
    <event type="alternative splicing"/>
    <isoform>
        <id>Q17902-1</id>
        <name evidence="8">a</name>
        <sequence type="displayed"/>
    </isoform>
    <isoform>
        <id>Q17902-2</id>
        <name evidence="9">b</name>
        <sequence type="described" ref="VSP_059366"/>
    </isoform>
</comment>
<comment type="disruption phenotype">
    <text evidence="3">RNAi-mediated knockdown results in animals that are viable. However, animals display a small, but significant, defect in nuclear migrations in hyp7 hypodermal precursor cells where an average of 3%, and up to 21% in a single animal, of nuclei fail to migrate.</text>
</comment>
<name>EGAL1_CAEEL</name>
<gene>
    <name evidence="4 8" type="primary">egal-1</name>
    <name evidence="8" type="ORF">C10G6.1</name>
</gene>
<keyword id="KW-0025">Alternative splicing</keyword>
<keyword id="KW-0539">Nucleus</keyword>
<keyword id="KW-1185">Reference proteome</keyword>
<organism evidence="7">
    <name type="scientific">Caenorhabditis elegans</name>
    <dbReference type="NCBI Taxonomy" id="6239"/>
    <lineage>
        <taxon>Eukaryota</taxon>
        <taxon>Metazoa</taxon>
        <taxon>Ecdysozoa</taxon>
        <taxon>Nematoda</taxon>
        <taxon>Chromadorea</taxon>
        <taxon>Rhabditida</taxon>
        <taxon>Rhabditina</taxon>
        <taxon>Rhabditomorpha</taxon>
        <taxon>Rhabditoidea</taxon>
        <taxon>Rhabditidae</taxon>
        <taxon>Peloderinae</taxon>
        <taxon>Caenorhabditis</taxon>
    </lineage>
</organism>
<reference evidence="7" key="1">
    <citation type="journal article" date="1998" name="Science">
        <title>Genome sequence of the nematode C. elegans: a platform for investigating biology.</title>
        <authorList>
            <consortium name="The C. elegans sequencing consortium"/>
        </authorList>
    </citation>
    <scope>NUCLEOTIDE SEQUENCE [LARGE SCALE GENOMIC DNA]</scope>
    <source>
        <strain evidence="7">Bristol N2</strain>
    </source>
</reference>
<reference evidence="5" key="2">
    <citation type="journal article" date="2010" name="Dev. Biol.">
        <title>UNC-83 coordinates kinesin-1 and dynein activities at the nuclear envelope during nuclear migration.</title>
        <authorList>
            <person name="Fridolfsson H.N."/>
            <person name="Ly N."/>
            <person name="Meyerzon M."/>
            <person name="Starr D.A."/>
        </authorList>
    </citation>
    <scope>FUNCTION</scope>
    <scope>IDENTIFICATION IN A COMPLEX WITH BICD-1 AND DLC-1</scope>
    <scope>SUBCELLULAR LOCATION</scope>
    <scope>DISRUPTION PHENOTYPE</scope>
</reference>
<dbReference type="EMBL" id="BX284604">
    <property type="protein sequence ID" value="CCD63389.1"/>
    <property type="molecule type" value="Genomic_DNA"/>
</dbReference>
<dbReference type="EMBL" id="BX284604">
    <property type="protein sequence ID" value="CCD63390.1"/>
    <property type="molecule type" value="Genomic_DNA"/>
</dbReference>
<dbReference type="PIR" id="T29937">
    <property type="entry name" value="T29937"/>
</dbReference>
<dbReference type="RefSeq" id="NP_001021323.1">
    <molecule id="Q17902-1"/>
    <property type="nucleotide sequence ID" value="NM_001026152.6"/>
</dbReference>
<dbReference type="RefSeq" id="NP_001021324.1">
    <molecule id="Q17902-2"/>
    <property type="nucleotide sequence ID" value="NM_001026153.3"/>
</dbReference>
<dbReference type="SMR" id="Q17902"/>
<dbReference type="ComplexPortal" id="CPX-1388">
    <property type="entry name" value="bicd-1-dlc-1-egal-1 microtubule-associated dynein motor complex"/>
</dbReference>
<dbReference type="DIP" id="DIP-26632N"/>
<dbReference type="FunCoup" id="Q17902">
    <property type="interactions" value="608"/>
</dbReference>
<dbReference type="IntAct" id="Q17902">
    <property type="interactions" value="2"/>
</dbReference>
<dbReference type="STRING" id="6239.C10G6.1a.2"/>
<dbReference type="PaxDb" id="6239-C10G6.1a.2"/>
<dbReference type="PeptideAtlas" id="Q17902"/>
<dbReference type="EnsemblMetazoa" id="C10G6.1a.1">
    <molecule id="Q17902-1"/>
    <property type="protein sequence ID" value="C10G6.1a.1"/>
    <property type="gene ID" value="WBGene00015680"/>
</dbReference>
<dbReference type="EnsemblMetazoa" id="C10G6.1b.1">
    <molecule id="Q17902-2"/>
    <property type="protein sequence ID" value="C10G6.1b.1"/>
    <property type="gene ID" value="WBGene00015680"/>
</dbReference>
<dbReference type="GeneID" id="177352"/>
<dbReference type="KEGG" id="cel:CELE_C10G6.1"/>
<dbReference type="UCSC" id="C10G6.1b.1">
    <property type="organism name" value="c. elegans"/>
</dbReference>
<dbReference type="AGR" id="WB:WBGene00015680"/>
<dbReference type="CTD" id="177352"/>
<dbReference type="WormBase" id="C10G6.1a">
    <molecule id="Q17902-1"/>
    <property type="protein sequence ID" value="CE27677"/>
    <property type="gene ID" value="WBGene00015680"/>
    <property type="gene designation" value="egal-1"/>
</dbReference>
<dbReference type="WormBase" id="C10G6.1b">
    <molecule id="Q17902-2"/>
    <property type="protein sequence ID" value="CE37193"/>
    <property type="gene ID" value="WBGene00015680"/>
    <property type="gene designation" value="egal-1"/>
</dbReference>
<dbReference type="eggNOG" id="KOG2405">
    <property type="taxonomic scope" value="Eukaryota"/>
</dbReference>
<dbReference type="GeneTree" id="ENSGT00390000003581"/>
<dbReference type="HOGENOM" id="CLU_008186_0_0_1"/>
<dbReference type="InParanoid" id="Q17902"/>
<dbReference type="OMA" id="GNPNKDQ"/>
<dbReference type="OrthoDB" id="26838at2759"/>
<dbReference type="PRO" id="PR:Q17902"/>
<dbReference type="Proteomes" id="UP000001940">
    <property type="component" value="Chromosome IV"/>
</dbReference>
<dbReference type="Bgee" id="WBGene00015680">
    <property type="expression patterns" value="Expressed in pharyngeal muscle cell (C elegans) and 3 other cell types or tissues"/>
</dbReference>
<dbReference type="GO" id="GO:0005875">
    <property type="term" value="C:microtubule associated complex"/>
    <property type="evidence" value="ECO:0000303"/>
    <property type="project" value="ComplexPortal"/>
</dbReference>
<dbReference type="GO" id="GO:0005635">
    <property type="term" value="C:nuclear envelope"/>
    <property type="evidence" value="ECO:0007669"/>
    <property type="project" value="UniProtKB-SubCell"/>
</dbReference>
<dbReference type="GO" id="GO:1990923">
    <property type="term" value="C:PET complex"/>
    <property type="evidence" value="ECO:0000318"/>
    <property type="project" value="GO_Central"/>
</dbReference>
<dbReference type="GO" id="GO:0008408">
    <property type="term" value="F:3'-5' exonuclease activity"/>
    <property type="evidence" value="ECO:0007669"/>
    <property type="project" value="InterPro"/>
</dbReference>
<dbReference type="GO" id="GO:0003676">
    <property type="term" value="F:nucleic acid binding"/>
    <property type="evidence" value="ECO:0007669"/>
    <property type="project" value="InterPro"/>
</dbReference>
<dbReference type="GO" id="GO:0030473">
    <property type="term" value="P:nuclear migration along microtubule"/>
    <property type="evidence" value="ECO:0000303"/>
    <property type="project" value="ComplexPortal"/>
</dbReference>
<dbReference type="GO" id="GO:0034587">
    <property type="term" value="P:piRNA processing"/>
    <property type="evidence" value="ECO:0000318"/>
    <property type="project" value="GO_Central"/>
</dbReference>
<dbReference type="CDD" id="cd06148">
    <property type="entry name" value="Egl_like_exo"/>
    <property type="match status" value="1"/>
</dbReference>
<dbReference type="Gene3D" id="3.30.420.10">
    <property type="entry name" value="Ribonuclease H-like superfamily/Ribonuclease H"/>
    <property type="match status" value="1"/>
</dbReference>
<dbReference type="InterPro" id="IPR002562">
    <property type="entry name" value="3'-5'_exonuclease_dom"/>
</dbReference>
<dbReference type="InterPro" id="IPR052144">
    <property type="entry name" value="piRNA_biogenesis_EXD1"/>
</dbReference>
<dbReference type="InterPro" id="IPR012337">
    <property type="entry name" value="RNaseH-like_sf"/>
</dbReference>
<dbReference type="InterPro" id="IPR036397">
    <property type="entry name" value="RNaseH_sf"/>
</dbReference>
<dbReference type="InterPro" id="IPR056589">
    <property type="entry name" value="WH_Egal-1"/>
</dbReference>
<dbReference type="PANTHER" id="PTHR46628">
    <property type="entry name" value="PIRNA BIOGENESIS PROTEIN EXD1"/>
    <property type="match status" value="1"/>
</dbReference>
<dbReference type="PANTHER" id="PTHR46628:SF1">
    <property type="entry name" value="PIRNA BIOGENESIS PROTEIN EXD1"/>
    <property type="match status" value="1"/>
</dbReference>
<dbReference type="Pfam" id="PF01612">
    <property type="entry name" value="DNA_pol_A_exo1"/>
    <property type="match status" value="1"/>
</dbReference>
<dbReference type="Pfam" id="PF23713">
    <property type="entry name" value="WH_Egal"/>
    <property type="match status" value="3"/>
</dbReference>
<dbReference type="SMART" id="SM00474">
    <property type="entry name" value="35EXOc"/>
    <property type="match status" value="1"/>
</dbReference>
<dbReference type="SUPFAM" id="SSF53098">
    <property type="entry name" value="Ribonuclease H-like"/>
    <property type="match status" value="1"/>
</dbReference>
<accession>Q17902</accession>
<accession>Q65ZH5</accession>
<sequence length="574" mass="64842">MEEAKNMALLFFMDHLMQKNGRRTIHDLSCQFGARGFSEEMRNAVGTTQEGLTEFLQGHPSLFTVEGDQVILNGHNDLNAKNNPLLQSGIRSRNYEKEAVDFFVTKLTKFGPELQIKSLLGHRSQAAPEVRLVSGRHLKEFCEFLQSQVDYFVVEGDRVRLKNMPEPDENAIEMDDEGRPLAGVKAKQAAVEYLKSVLEQNEDQPIPLDQFYQNFCQRFSHTIRQDVATNPKELLQFLKLNRGLFFIRSNKVSLVKNRLNEDGSENGSDEGEETNNNGMFPLDQSALTRIHFVKALKPAQDLISRLWQDINNMEKKVVGLDLKTVTVGVDGEIFLSLGVIATTSQIGIFDLASSDVIILESGFKGILESEKVVKVIHDARRVASLLAHKYAVHMRNVFDTQVAHSLLQHEKFNKSLNEMRPISFINLQRVYYPQSIMLSDVTPRKMSMCPNWGVRPITEEFQLTIVEEAHCLLSALYQSLSNLIPVHLRGVFEDKCIEVNHPEVLLASPNRPPPQPFISSPYRASTRRDVRNGGSIMQSFSPAPYAAAPRPQMSDACTQTFSTGDIEVLNVFYE</sequence>
<evidence type="ECO:0000255" key="1"/>
<evidence type="ECO:0000256" key="2">
    <source>
        <dbReference type="SAM" id="MobiDB-lite"/>
    </source>
</evidence>
<evidence type="ECO:0000269" key="3">
    <source>
    </source>
</evidence>
<evidence type="ECO:0000303" key="4">
    <source>
    </source>
</evidence>
<evidence type="ECO:0000305" key="5"/>
<evidence type="ECO:0000305" key="6">
    <source>
    </source>
</evidence>
<evidence type="ECO:0000312" key="7">
    <source>
        <dbReference type="Proteomes" id="UP000001940"/>
    </source>
</evidence>
<evidence type="ECO:0000312" key="8">
    <source>
        <dbReference type="WormBase" id="C10G6.1a"/>
    </source>
</evidence>
<evidence type="ECO:0000312" key="9">
    <source>
        <dbReference type="WormBase" id="C10G6.1b"/>
    </source>
</evidence>
<feature type="chain" id="PRO_0000443515" description="Egalitarian protein homolog" evidence="5">
    <location>
        <begin position="1"/>
        <end position="574"/>
    </location>
</feature>
<feature type="domain" description="3'-5' exonuclease" evidence="1">
    <location>
        <begin position="312"/>
        <end position="414"/>
    </location>
</feature>
<feature type="region of interest" description="Disordered" evidence="2">
    <location>
        <begin position="259"/>
        <end position="278"/>
    </location>
</feature>
<feature type="compositionally biased region" description="Acidic residues" evidence="2">
    <location>
        <begin position="262"/>
        <end position="273"/>
    </location>
</feature>
<feature type="splice variant" id="VSP_059366" description="In isoform b." evidence="5">
    <location>
        <begin position="498"/>
        <end position="502"/>
    </location>
</feature>
<protein>
    <recommendedName>
        <fullName evidence="8">Egalitarian protein homolog</fullName>
    </recommendedName>
</protein>